<sequence>MKLPQPLFQGTLIRRYQRFLADVELEDGTVVTAHTPNTGSMMGCACPGNRVLLSKSASLTRKYPHSWELVQADGTWVGINTQLPNLLAREAILDGTISELSGYRQIRGEVPYGSGSRIDLLLSGERGLCYVETKNVTLVKDGVALFPDAVSARGQKHLRELMEMVRQGHRAVNLFIVQRADGVALAPADAIDPVYGRLLREAAQNGVEILAYRAEVTRTEVRLERALPVLL</sequence>
<gene>
    <name evidence="1" type="primary">sfsA</name>
    <name type="ordered locus">GM21_1751</name>
</gene>
<organism>
    <name type="scientific">Geobacter sp. (strain M21)</name>
    <dbReference type="NCBI Taxonomy" id="443144"/>
    <lineage>
        <taxon>Bacteria</taxon>
        <taxon>Pseudomonadati</taxon>
        <taxon>Thermodesulfobacteriota</taxon>
        <taxon>Desulfuromonadia</taxon>
        <taxon>Geobacterales</taxon>
        <taxon>Geobacteraceae</taxon>
        <taxon>Geobacter</taxon>
    </lineage>
</organism>
<feature type="chain" id="PRO_1000202722" description="Sugar fermentation stimulation protein homolog">
    <location>
        <begin position="1"/>
        <end position="231"/>
    </location>
</feature>
<dbReference type="EMBL" id="CP001661">
    <property type="protein sequence ID" value="ACT17805.1"/>
    <property type="molecule type" value="Genomic_DNA"/>
</dbReference>
<dbReference type="SMR" id="C6E6G4"/>
<dbReference type="STRING" id="443144.GM21_1751"/>
<dbReference type="KEGG" id="gem:GM21_1751"/>
<dbReference type="eggNOG" id="COG1489">
    <property type="taxonomic scope" value="Bacteria"/>
</dbReference>
<dbReference type="HOGENOM" id="CLU_052299_2_0_7"/>
<dbReference type="OrthoDB" id="9802365at2"/>
<dbReference type="GO" id="GO:0003677">
    <property type="term" value="F:DNA binding"/>
    <property type="evidence" value="ECO:0007669"/>
    <property type="project" value="InterPro"/>
</dbReference>
<dbReference type="CDD" id="cd22359">
    <property type="entry name" value="SfsA-like_bacterial"/>
    <property type="match status" value="1"/>
</dbReference>
<dbReference type="Gene3D" id="2.40.50.580">
    <property type="match status" value="1"/>
</dbReference>
<dbReference type="Gene3D" id="3.40.1350.60">
    <property type="match status" value="1"/>
</dbReference>
<dbReference type="HAMAP" id="MF_00095">
    <property type="entry name" value="SfsA"/>
    <property type="match status" value="1"/>
</dbReference>
<dbReference type="InterPro" id="IPR005224">
    <property type="entry name" value="SfsA"/>
</dbReference>
<dbReference type="InterPro" id="IPR040452">
    <property type="entry name" value="SfsA_C"/>
</dbReference>
<dbReference type="InterPro" id="IPR041465">
    <property type="entry name" value="SfsA_N"/>
</dbReference>
<dbReference type="NCBIfam" id="TIGR00230">
    <property type="entry name" value="sfsA"/>
    <property type="match status" value="1"/>
</dbReference>
<dbReference type="PANTHER" id="PTHR30545">
    <property type="entry name" value="SUGAR FERMENTATION STIMULATION PROTEIN A"/>
    <property type="match status" value="1"/>
</dbReference>
<dbReference type="PANTHER" id="PTHR30545:SF2">
    <property type="entry name" value="SUGAR FERMENTATION STIMULATION PROTEIN A"/>
    <property type="match status" value="1"/>
</dbReference>
<dbReference type="Pfam" id="PF03749">
    <property type="entry name" value="SfsA"/>
    <property type="match status" value="1"/>
</dbReference>
<dbReference type="Pfam" id="PF17746">
    <property type="entry name" value="SfsA_N"/>
    <property type="match status" value="1"/>
</dbReference>
<protein>
    <recommendedName>
        <fullName evidence="1">Sugar fermentation stimulation protein homolog</fullName>
    </recommendedName>
</protein>
<name>SFSA_GEOSM</name>
<comment type="similarity">
    <text evidence="1">Belongs to the SfsA family.</text>
</comment>
<proteinExistence type="inferred from homology"/>
<evidence type="ECO:0000255" key="1">
    <source>
        <dbReference type="HAMAP-Rule" id="MF_00095"/>
    </source>
</evidence>
<reference key="1">
    <citation type="submission" date="2009-07" db="EMBL/GenBank/DDBJ databases">
        <title>Complete sequence of Geobacter sp. M21.</title>
        <authorList>
            <consortium name="US DOE Joint Genome Institute"/>
            <person name="Lucas S."/>
            <person name="Copeland A."/>
            <person name="Lapidus A."/>
            <person name="Glavina del Rio T."/>
            <person name="Dalin E."/>
            <person name="Tice H."/>
            <person name="Bruce D."/>
            <person name="Goodwin L."/>
            <person name="Pitluck S."/>
            <person name="Saunders E."/>
            <person name="Brettin T."/>
            <person name="Detter J.C."/>
            <person name="Han C."/>
            <person name="Larimer F."/>
            <person name="Land M."/>
            <person name="Hauser L."/>
            <person name="Kyrpides N."/>
            <person name="Ovchinnikova G."/>
            <person name="Lovley D."/>
        </authorList>
    </citation>
    <scope>NUCLEOTIDE SEQUENCE [LARGE SCALE GENOMIC DNA]</scope>
    <source>
        <strain>M21</strain>
    </source>
</reference>
<accession>C6E6G4</accession>